<name>ATPF2_RUEST</name>
<dbReference type="EMBL" id="CP000377">
    <property type="protein sequence ID" value="ABF65324.1"/>
    <property type="molecule type" value="Genomic_DNA"/>
</dbReference>
<dbReference type="RefSeq" id="WP_011539907.1">
    <property type="nucleotide sequence ID" value="NC_008044.1"/>
</dbReference>
<dbReference type="SMR" id="Q1GDE2"/>
<dbReference type="STRING" id="292414.TM1040_2592"/>
<dbReference type="KEGG" id="sit:TM1040_2592"/>
<dbReference type="eggNOG" id="COG0711">
    <property type="taxonomic scope" value="Bacteria"/>
</dbReference>
<dbReference type="HOGENOM" id="CLU_079215_1_0_5"/>
<dbReference type="Proteomes" id="UP000000636">
    <property type="component" value="Chromosome"/>
</dbReference>
<dbReference type="GO" id="GO:0005886">
    <property type="term" value="C:plasma membrane"/>
    <property type="evidence" value="ECO:0007669"/>
    <property type="project" value="UniProtKB-SubCell"/>
</dbReference>
<dbReference type="GO" id="GO:0045259">
    <property type="term" value="C:proton-transporting ATP synthase complex"/>
    <property type="evidence" value="ECO:0007669"/>
    <property type="project" value="UniProtKB-KW"/>
</dbReference>
<dbReference type="GO" id="GO:0046933">
    <property type="term" value="F:proton-transporting ATP synthase activity, rotational mechanism"/>
    <property type="evidence" value="ECO:0007669"/>
    <property type="project" value="UniProtKB-UniRule"/>
</dbReference>
<dbReference type="GO" id="GO:0046961">
    <property type="term" value="F:proton-transporting ATPase activity, rotational mechanism"/>
    <property type="evidence" value="ECO:0007669"/>
    <property type="project" value="TreeGrafter"/>
</dbReference>
<dbReference type="CDD" id="cd06503">
    <property type="entry name" value="ATP-synt_Fo_b"/>
    <property type="match status" value="1"/>
</dbReference>
<dbReference type="HAMAP" id="MF_01398">
    <property type="entry name" value="ATP_synth_b_bprime"/>
    <property type="match status" value="1"/>
</dbReference>
<dbReference type="InterPro" id="IPR002146">
    <property type="entry name" value="ATP_synth_b/b'su_bac/chlpt"/>
</dbReference>
<dbReference type="InterPro" id="IPR050059">
    <property type="entry name" value="ATP_synthase_B_chain"/>
</dbReference>
<dbReference type="NCBIfam" id="NF009988">
    <property type="entry name" value="PRK13454.1"/>
    <property type="match status" value="1"/>
</dbReference>
<dbReference type="PANTHER" id="PTHR33445:SF1">
    <property type="entry name" value="ATP SYNTHASE SUBUNIT B"/>
    <property type="match status" value="1"/>
</dbReference>
<dbReference type="PANTHER" id="PTHR33445">
    <property type="entry name" value="ATP SYNTHASE SUBUNIT B', CHLOROPLASTIC"/>
    <property type="match status" value="1"/>
</dbReference>
<dbReference type="Pfam" id="PF00430">
    <property type="entry name" value="ATP-synt_B"/>
    <property type="match status" value="1"/>
</dbReference>
<accession>Q1GDE2</accession>
<organism>
    <name type="scientific">Ruegeria sp. (strain TM1040)</name>
    <name type="common">Silicibacter sp.</name>
    <dbReference type="NCBI Taxonomy" id="292414"/>
    <lineage>
        <taxon>Bacteria</taxon>
        <taxon>Pseudomonadati</taxon>
        <taxon>Pseudomonadota</taxon>
        <taxon>Alphaproteobacteria</taxon>
        <taxon>Rhodobacterales</taxon>
        <taxon>Roseobacteraceae</taxon>
        <taxon>Ruegeria</taxon>
    </lineage>
</organism>
<protein>
    <recommendedName>
        <fullName>ATP synthase subunit b 2</fullName>
    </recommendedName>
    <alternativeName>
        <fullName>ATP synthase F(0) sector subunit b 2</fullName>
    </alternativeName>
    <alternativeName>
        <fullName>ATPase subunit I 2</fullName>
    </alternativeName>
    <alternativeName>
        <fullName>F-type ATPase subunit b 2</fullName>
        <shortName>F-ATPase subunit b 2</shortName>
    </alternativeName>
</protein>
<sequence>MATTTHDAGHGAAEAAHGSSGMPQLDFSTYGNQIFWLLVTLVVIYLILSRIALPRIAAILNERQGTITNDLAAAEDLKAKAVEAENAYNKALADARAEAQRIAAETRAEIQAEVDEAIAKADAEISAKAAESEKAIAEIRAGALESVKVVAADTASALVAALGGKDDADAVKAAVAERTEG</sequence>
<keyword id="KW-0066">ATP synthesis</keyword>
<keyword id="KW-0997">Cell inner membrane</keyword>
<keyword id="KW-1003">Cell membrane</keyword>
<keyword id="KW-0138">CF(0)</keyword>
<keyword id="KW-0375">Hydrogen ion transport</keyword>
<keyword id="KW-0406">Ion transport</keyword>
<keyword id="KW-0472">Membrane</keyword>
<keyword id="KW-1185">Reference proteome</keyword>
<keyword id="KW-0812">Transmembrane</keyword>
<keyword id="KW-1133">Transmembrane helix</keyword>
<keyword id="KW-0813">Transport</keyword>
<reference key="1">
    <citation type="submission" date="2006-05" db="EMBL/GenBank/DDBJ databases">
        <title>Complete sequence of chromosome of Silicibacter sp. TM1040.</title>
        <authorList>
            <consortium name="US DOE Joint Genome Institute"/>
            <person name="Copeland A."/>
            <person name="Lucas S."/>
            <person name="Lapidus A."/>
            <person name="Barry K."/>
            <person name="Detter J.C."/>
            <person name="Glavina del Rio T."/>
            <person name="Hammon N."/>
            <person name="Israni S."/>
            <person name="Dalin E."/>
            <person name="Tice H."/>
            <person name="Pitluck S."/>
            <person name="Brettin T."/>
            <person name="Bruce D."/>
            <person name="Han C."/>
            <person name="Tapia R."/>
            <person name="Goodwin L."/>
            <person name="Thompson L.S."/>
            <person name="Gilna P."/>
            <person name="Schmutz J."/>
            <person name="Larimer F."/>
            <person name="Land M."/>
            <person name="Hauser L."/>
            <person name="Kyrpides N."/>
            <person name="Kim E."/>
            <person name="Belas R."/>
            <person name="Moran M.A."/>
            <person name="Buchan A."/>
            <person name="Gonzalez J.M."/>
            <person name="Schell M.A."/>
            <person name="Sun F."/>
            <person name="Richardson P."/>
        </authorList>
    </citation>
    <scope>NUCLEOTIDE SEQUENCE [LARGE SCALE GENOMIC DNA]</scope>
    <source>
        <strain>TM1040</strain>
    </source>
</reference>
<evidence type="ECO:0000250" key="1"/>
<evidence type="ECO:0000255" key="2"/>
<evidence type="ECO:0000256" key="3">
    <source>
        <dbReference type="SAM" id="MobiDB-lite"/>
    </source>
</evidence>
<evidence type="ECO:0000305" key="4"/>
<comment type="function">
    <text evidence="1">F(1)F(0) ATP synthase produces ATP from ADP in the presence of a proton or sodium gradient. F-type ATPases consist of two structural domains, F(1) containing the extramembraneous catalytic core and F(0) containing the membrane proton channel, linked together by a central stalk and a peripheral stalk. During catalysis, ATP synthesis in the catalytic domain of F(1) is coupled via a rotary mechanism of the central stalk subunits to proton translocation (By similarity).</text>
</comment>
<comment type="function">
    <text evidence="1">Component of the F(0) channel, it forms part of the peripheral stalk, linking F(1) to F(0). The b'-subunit is a diverged and duplicated form of b found in plants and photosynthetic bacteria (By similarity).</text>
</comment>
<comment type="subunit">
    <text evidence="1">F-type ATPases have 2 components, F(1) - the catalytic core - and F(0) - the membrane proton channel. F(1) has five subunits: alpha(3), beta(3), gamma(1), delta(1), epsilon(1). F(0) has three main subunits: a(1), b(2) and c(10-14). The alpha and beta chains form an alternating ring which encloses part of the gamma chain. F(1) is attached to F(0) by a central stalk formed by the gamma and epsilon chains, while a peripheral stalk is formed by the delta and b chains (By similarity).</text>
</comment>
<comment type="subcellular location">
    <subcellularLocation>
        <location evidence="1">Cell inner membrane</location>
        <topology evidence="1">Single-pass membrane protein</topology>
    </subcellularLocation>
</comment>
<comment type="similarity">
    <text evidence="4">Belongs to the ATPase B chain family.</text>
</comment>
<feature type="chain" id="PRO_0000369048" description="ATP synthase subunit b 2">
    <location>
        <begin position="1"/>
        <end position="181"/>
    </location>
</feature>
<feature type="transmembrane region" description="Helical" evidence="2">
    <location>
        <begin position="34"/>
        <end position="54"/>
    </location>
</feature>
<feature type="region of interest" description="Disordered" evidence="3">
    <location>
        <begin position="1"/>
        <end position="20"/>
    </location>
</feature>
<feature type="compositionally biased region" description="Low complexity" evidence="3">
    <location>
        <begin position="1"/>
        <end position="18"/>
    </location>
</feature>
<proteinExistence type="inferred from homology"/>
<gene>
    <name type="primary">atpF2</name>
    <name type="synonym">atpG</name>
    <name type="ordered locus">TM1040_2592</name>
</gene>